<evidence type="ECO:0000255" key="1">
    <source>
        <dbReference type="HAMAP-Rule" id="MF_00386"/>
    </source>
</evidence>
<gene>
    <name type="ordered locus">CMS3113</name>
</gene>
<proteinExistence type="inferred from homology"/>
<accession>B0RDQ2</accession>
<name>YIDD_CLASE</name>
<organism>
    <name type="scientific">Clavibacter sepedonicus</name>
    <name type="common">Clavibacter michiganensis subsp. sepedonicus</name>
    <dbReference type="NCBI Taxonomy" id="31964"/>
    <lineage>
        <taxon>Bacteria</taxon>
        <taxon>Bacillati</taxon>
        <taxon>Actinomycetota</taxon>
        <taxon>Actinomycetes</taxon>
        <taxon>Micrococcales</taxon>
        <taxon>Microbacteriaceae</taxon>
        <taxon>Clavibacter</taxon>
    </lineage>
</organism>
<comment type="function">
    <text evidence="1">Could be involved in insertion of integral membrane proteins into the membrane.</text>
</comment>
<comment type="subcellular location">
    <subcellularLocation>
        <location evidence="1">Cell membrane</location>
        <topology evidence="1">Peripheral membrane protein</topology>
        <orientation evidence="1">Cytoplasmic side</orientation>
    </subcellularLocation>
</comment>
<comment type="similarity">
    <text evidence="1">Belongs to the UPF0161 family.</text>
</comment>
<protein>
    <recommendedName>
        <fullName evidence="1">Putative membrane protein insertion efficiency factor</fullName>
    </recommendedName>
</protein>
<keyword id="KW-1003">Cell membrane</keyword>
<keyword id="KW-0472">Membrane</keyword>
<dbReference type="EMBL" id="AM849034">
    <property type="protein sequence ID" value="CAQ03181.1"/>
    <property type="molecule type" value="Genomic_DNA"/>
</dbReference>
<dbReference type="STRING" id="31964.CMS3113"/>
<dbReference type="KEGG" id="cms:CMS3113"/>
<dbReference type="eggNOG" id="COG0759">
    <property type="taxonomic scope" value="Bacteria"/>
</dbReference>
<dbReference type="HOGENOM" id="CLU_144811_5_0_11"/>
<dbReference type="OrthoDB" id="9801753at2"/>
<dbReference type="Proteomes" id="UP000001318">
    <property type="component" value="Chromosome"/>
</dbReference>
<dbReference type="GO" id="GO:0005886">
    <property type="term" value="C:plasma membrane"/>
    <property type="evidence" value="ECO:0007669"/>
    <property type="project" value="UniProtKB-SubCell"/>
</dbReference>
<dbReference type="HAMAP" id="MF_00386">
    <property type="entry name" value="UPF0161_YidD"/>
    <property type="match status" value="1"/>
</dbReference>
<dbReference type="InterPro" id="IPR002696">
    <property type="entry name" value="Membr_insert_effic_factor_YidD"/>
</dbReference>
<dbReference type="NCBIfam" id="TIGR00278">
    <property type="entry name" value="membrane protein insertion efficiency factor YidD"/>
    <property type="match status" value="1"/>
</dbReference>
<dbReference type="PANTHER" id="PTHR33383">
    <property type="entry name" value="MEMBRANE PROTEIN INSERTION EFFICIENCY FACTOR-RELATED"/>
    <property type="match status" value="1"/>
</dbReference>
<dbReference type="PANTHER" id="PTHR33383:SF1">
    <property type="entry name" value="MEMBRANE PROTEIN INSERTION EFFICIENCY FACTOR-RELATED"/>
    <property type="match status" value="1"/>
</dbReference>
<dbReference type="Pfam" id="PF01809">
    <property type="entry name" value="YidD"/>
    <property type="match status" value="1"/>
</dbReference>
<dbReference type="SMART" id="SM01234">
    <property type="entry name" value="Haemolytic"/>
    <property type="match status" value="1"/>
</dbReference>
<feature type="chain" id="PRO_1000080183" description="Putative membrane protein insertion efficiency factor">
    <location>
        <begin position="1"/>
        <end position="103"/>
    </location>
</feature>
<reference key="1">
    <citation type="journal article" date="2008" name="J. Bacteriol.">
        <title>Genome of the actinomycete plant pathogen Clavibacter michiganensis subsp. sepedonicus suggests recent niche adaptation.</title>
        <authorList>
            <person name="Bentley S.D."/>
            <person name="Corton C."/>
            <person name="Brown S.E."/>
            <person name="Barron A."/>
            <person name="Clark L."/>
            <person name="Doggett J."/>
            <person name="Harris B."/>
            <person name="Ormond D."/>
            <person name="Quail M.A."/>
            <person name="May G."/>
            <person name="Francis D."/>
            <person name="Knudson D."/>
            <person name="Parkhill J."/>
            <person name="Ishimaru C.A."/>
        </authorList>
    </citation>
    <scope>NUCLEOTIDE SEQUENCE [LARGE SCALE GENOMIC DNA]</scope>
    <source>
        <strain>ATCC 33113 / DSM 20744 / JCM 9667 / LMG 2889 / ICMP 2535 / C-1</strain>
    </source>
</reference>
<sequence>MKRVLTSVVLAPRNAAIAVIGLYRRIVSPLYGDVCRYYPSCSAYGLEAVQEHGLIRGGGLAVWRVCRCHPWAEGGIDDVPARQVQQYRRTRYGFVVAPSHGKG</sequence>